<keyword id="KW-0998">Cell outer membrane</keyword>
<keyword id="KW-0472">Membrane</keyword>
<keyword id="KW-0677">Repeat</keyword>
<keyword id="KW-0732">Signal</keyword>
<keyword id="KW-0812">Transmembrane</keyword>
<keyword id="KW-1134">Transmembrane beta strand</keyword>
<name>BAMA2_HAEIF</name>
<feature type="signal peptide" evidence="1">
    <location>
        <begin position="1"/>
        <end position="19"/>
    </location>
</feature>
<feature type="chain" id="PRO_0000033469" description="Outer membrane protein assembly factor BamA">
    <location>
        <begin position="20"/>
        <end position="793"/>
    </location>
</feature>
<feature type="domain" description="POTRA 1" evidence="2">
    <location>
        <begin position="22"/>
        <end position="89"/>
    </location>
</feature>
<feature type="domain" description="POTRA 2" evidence="2">
    <location>
        <begin position="90"/>
        <end position="170"/>
    </location>
</feature>
<feature type="domain" description="POTRA 3" evidence="2">
    <location>
        <begin position="173"/>
        <end position="259"/>
    </location>
</feature>
<feature type="domain" description="POTRA 4" evidence="2">
    <location>
        <begin position="262"/>
        <end position="341"/>
    </location>
</feature>
<feature type="domain" description="POTRA 5" evidence="2">
    <location>
        <begin position="344"/>
        <end position="418"/>
    </location>
</feature>
<comment type="function">
    <text evidence="1">Part of the outer membrane protein assembly complex, which is involved in assembly and insertion of beta-barrel proteins into the outer membrane.</text>
</comment>
<comment type="subunit">
    <text evidence="1">Part of the Bam complex.</text>
</comment>
<comment type="subcellular location">
    <subcellularLocation>
        <location evidence="1">Cell outer membrane</location>
    </subcellularLocation>
</comment>
<comment type="similarity">
    <text evidence="1">Belongs to the BamA family.</text>
</comment>
<reference key="1">
    <citation type="journal article" date="1997" name="Infect. Immun.">
        <title>Outer membrane protein D15 is conserved among Haemophilus influenzae species and may represent a universal protective antigen against invasive disease.</title>
        <authorList>
            <person name="Loosmore S.M."/>
            <person name="Yang Y.P."/>
            <person name="Coleman D.C."/>
            <person name="Shortreed J.M."/>
            <person name="England D.M."/>
            <person name="Klein M.H."/>
        </authorList>
    </citation>
    <scope>NUCLEOTIDE SEQUENCE [GENOMIC DNA]</scope>
    <source>
        <strain>PAK 12085</strain>
    </source>
</reference>
<accession>O32629</accession>
<protein>
    <recommendedName>
        <fullName evidence="1">Outer membrane protein assembly factor BamA</fullName>
    </recommendedName>
    <alternativeName>
        <fullName>80 kDa D15 antigen</fullName>
        <shortName>D-15-Ag</shortName>
    </alternativeName>
    <alternativeName>
        <fullName>Outer membrane protein D15</fullName>
    </alternativeName>
    <alternativeName>
        <fullName>Protective surface antigen D15</fullName>
    </alternativeName>
</protein>
<organism>
    <name type="scientific">Haemophilus influenzae</name>
    <dbReference type="NCBI Taxonomy" id="727"/>
    <lineage>
        <taxon>Bacteria</taxon>
        <taxon>Pseudomonadati</taxon>
        <taxon>Pseudomonadota</taxon>
        <taxon>Gammaproteobacteria</taxon>
        <taxon>Pasteurellales</taxon>
        <taxon>Pasteurellaceae</taxon>
        <taxon>Haemophilus</taxon>
    </lineage>
</organism>
<sequence length="793" mass="87512">MKKLLIASLLFGTTTTVFAAPFVAKDIRVDGVQGDLEQQIRASLPVRAGQRVTDNDVANIVRSLFVSGRFDDVKAHQEGDVLVVSVVAKSIISDVKIKGNSVIPTEALKQNLDANGFKVGDVLIREKLNEFAKSVKEHYASVGRYNATVEPIVNTLPNNRAEILIQINEDDKAKLASLTFKGNESVSSSTLQEQMELQPDSWWKLWGNKFEGAQFEKDLQAIRDYYLNNGYAKAQITKTDVQLNDEKTKVNVTIDVNEGLQYDLRSARIIGNLGGMSAELEPLLSALHLNDTFRRSDIADVENAIKAKLGERGYGNTTVNSVPDFDDANKTLAITFVVDAGRRLTVRQLRFEGNTVSADSTLRQEMRQQEGTWYNSQLVELGKIRLDRTGFFETVENRIDPINGSNDEVDVVYKVKERNTGSINFGIGYGTESGISYQTSIKQDNFLGTGAAVSIAGTKNDYGTSVNLGYTEPYFTKDGVSLGGNIFFENYDNSKSDTSSNYKRTTYGSNVTLGFPVNENNSYYVGLGHTYNKISNFALEYNRNLYIQSMKFKGNGIKTNDFDFSFGWNYNSLNRGYFPTKGVKASLGGRVTIPGSDNKYYKLSADVQGFYPLDRDHRWVVSAKASAGYANGFGNKRLPFYQTYTAGGIGSLRGFAYGSIGPNAIYAEHGNGTFNKISSDVIGGNAITTASAELIVPTPFVSDKSQNTVRTSLFVDAASVWNTKWKSDKNGLESKVLKDLPDYGKSSRIRASTGVGFQWQSPIGPLVFSYAKPIKKYENDDVEQFQFSIGGSF</sequence>
<dbReference type="EMBL" id="U60834">
    <property type="protein sequence ID" value="AAB61977.1"/>
    <property type="molecule type" value="Genomic_DNA"/>
</dbReference>
<dbReference type="SMR" id="O32629"/>
<dbReference type="GO" id="GO:1990063">
    <property type="term" value="C:Bam protein complex"/>
    <property type="evidence" value="ECO:0007669"/>
    <property type="project" value="TreeGrafter"/>
</dbReference>
<dbReference type="GO" id="GO:0043165">
    <property type="term" value="P:Gram-negative-bacterium-type cell outer membrane assembly"/>
    <property type="evidence" value="ECO:0007669"/>
    <property type="project" value="UniProtKB-UniRule"/>
</dbReference>
<dbReference type="GO" id="GO:0051205">
    <property type="term" value="P:protein insertion into membrane"/>
    <property type="evidence" value="ECO:0007669"/>
    <property type="project" value="UniProtKB-UniRule"/>
</dbReference>
<dbReference type="FunFam" id="2.40.160.50:FF:000001">
    <property type="entry name" value="Outer membrane protein assembly factor BamA"/>
    <property type="match status" value="1"/>
</dbReference>
<dbReference type="FunFam" id="3.10.20.310:FF:000001">
    <property type="entry name" value="Outer membrane protein assembly factor BamA"/>
    <property type="match status" value="1"/>
</dbReference>
<dbReference type="FunFam" id="3.10.20.310:FF:000024">
    <property type="entry name" value="Outer membrane protein assembly factor BamA"/>
    <property type="match status" value="1"/>
</dbReference>
<dbReference type="Gene3D" id="3.10.20.310">
    <property type="entry name" value="membrane protein fhac"/>
    <property type="match status" value="5"/>
</dbReference>
<dbReference type="Gene3D" id="2.40.160.50">
    <property type="entry name" value="membrane protein fhac: a member of the omp85/tpsb transporter family"/>
    <property type="match status" value="1"/>
</dbReference>
<dbReference type="HAMAP" id="MF_01430">
    <property type="entry name" value="OM_assembly_BamA"/>
    <property type="match status" value="1"/>
</dbReference>
<dbReference type="InterPro" id="IPR000184">
    <property type="entry name" value="Bac_surfAg_D15"/>
</dbReference>
<dbReference type="InterPro" id="IPR010827">
    <property type="entry name" value="BamA/TamA_POTRA"/>
</dbReference>
<dbReference type="InterPro" id="IPR039910">
    <property type="entry name" value="D15-like"/>
</dbReference>
<dbReference type="InterPro" id="IPR023707">
    <property type="entry name" value="OM_assembly_BamA"/>
</dbReference>
<dbReference type="InterPro" id="IPR034746">
    <property type="entry name" value="POTRA"/>
</dbReference>
<dbReference type="NCBIfam" id="TIGR03303">
    <property type="entry name" value="OM_YaeT"/>
    <property type="match status" value="1"/>
</dbReference>
<dbReference type="PANTHER" id="PTHR12815:SF23">
    <property type="entry name" value="OUTER MEMBRANE PROTEIN ASSEMBLY FACTOR BAMA"/>
    <property type="match status" value="1"/>
</dbReference>
<dbReference type="PANTHER" id="PTHR12815">
    <property type="entry name" value="SORTING AND ASSEMBLY MACHINERY SAMM50 PROTEIN FAMILY MEMBER"/>
    <property type="match status" value="1"/>
</dbReference>
<dbReference type="Pfam" id="PF01103">
    <property type="entry name" value="Omp85"/>
    <property type="match status" value="1"/>
</dbReference>
<dbReference type="Pfam" id="PF07244">
    <property type="entry name" value="POTRA"/>
    <property type="match status" value="4"/>
</dbReference>
<dbReference type="PIRSF" id="PIRSF006076">
    <property type="entry name" value="OM_assembly_OMP85"/>
    <property type="match status" value="1"/>
</dbReference>
<dbReference type="PROSITE" id="PS51779">
    <property type="entry name" value="POTRA"/>
    <property type="match status" value="5"/>
</dbReference>
<gene>
    <name evidence="1" type="primary">bamA</name>
</gene>
<evidence type="ECO:0000255" key="1">
    <source>
        <dbReference type="HAMAP-Rule" id="MF_01430"/>
    </source>
</evidence>
<evidence type="ECO:0000255" key="2">
    <source>
        <dbReference type="PROSITE-ProRule" id="PRU01115"/>
    </source>
</evidence>
<proteinExistence type="inferred from homology"/>